<proteinExistence type="inferred from homology"/>
<protein>
    <recommendedName>
        <fullName>Mediator of RNA polymerase II transcription subunit 18</fullName>
    </recommendedName>
    <alternativeName>
        <fullName>Mediator complex subunit 18</fullName>
    </alternativeName>
</protein>
<comment type="function">
    <text evidence="1">Component of the Mediator complex, a coactivator involved in the regulated transcription of nearly all RNA polymerase II-dependent genes. Mediator functions as a bridge to convey information from gene-specific regulatory proteins to the basal RNA polymerase II transcription machinery. Mediator is recruited to promoters by direct interactions with regulatory proteins and serves as a scaffold for the assembly of a functional preinitiation complex with RNA polymerase II and the general transcription factors (By similarity).</text>
</comment>
<comment type="subunit">
    <text evidence="1">Component of the Mediator complex.</text>
</comment>
<comment type="subcellular location">
    <subcellularLocation>
        <location evidence="1">Nucleus</location>
    </subcellularLocation>
</comment>
<comment type="similarity">
    <text evidence="2">Belongs to the Mediator complex subunit 18 family.</text>
</comment>
<name>MED18_CANGA</name>
<feature type="chain" id="PRO_0000304758" description="Mediator of RNA polymerase II transcription subunit 18">
    <location>
        <begin position="1"/>
        <end position="266"/>
    </location>
</feature>
<gene>
    <name type="primary">SRB5</name>
    <name type="synonym">MED18</name>
    <name type="ordered locus">CAGL0G07865g</name>
</gene>
<dbReference type="EMBL" id="CR380953">
    <property type="protein sequence ID" value="CAG59631.1"/>
    <property type="molecule type" value="Genomic_DNA"/>
</dbReference>
<dbReference type="RefSeq" id="XP_446704.1">
    <property type="nucleotide sequence ID" value="XM_446704.1"/>
</dbReference>
<dbReference type="SMR" id="Q6FSU0"/>
<dbReference type="FunCoup" id="Q6FSU0">
    <property type="interactions" value="151"/>
</dbReference>
<dbReference type="STRING" id="284593.Q6FSU0"/>
<dbReference type="EnsemblFungi" id="CAGL0G07865g-T">
    <property type="protein sequence ID" value="CAGL0G07865g-T-p1"/>
    <property type="gene ID" value="CAGL0G07865g"/>
</dbReference>
<dbReference type="KEGG" id="cgr:2888381"/>
<dbReference type="CGD" id="CAL0130037">
    <property type="gene designation" value="CAGL0G07865g"/>
</dbReference>
<dbReference type="VEuPathDB" id="FungiDB:CAGL0G07865g"/>
<dbReference type="eggNOG" id="ENOG502RXWG">
    <property type="taxonomic scope" value="Eukaryota"/>
</dbReference>
<dbReference type="HOGENOM" id="CLU_058255_1_0_1"/>
<dbReference type="InParanoid" id="Q6FSU0"/>
<dbReference type="Proteomes" id="UP000002428">
    <property type="component" value="Chromosome G"/>
</dbReference>
<dbReference type="GO" id="GO:0070847">
    <property type="term" value="C:core mediator complex"/>
    <property type="evidence" value="ECO:0007669"/>
    <property type="project" value="EnsemblFungi"/>
</dbReference>
<dbReference type="GO" id="GO:0016592">
    <property type="term" value="C:mediator complex"/>
    <property type="evidence" value="ECO:0007669"/>
    <property type="project" value="InterPro"/>
</dbReference>
<dbReference type="GO" id="GO:0000979">
    <property type="term" value="F:RNA polymerase II core promoter sequence-specific DNA binding"/>
    <property type="evidence" value="ECO:0007669"/>
    <property type="project" value="EnsemblFungi"/>
</dbReference>
<dbReference type="GO" id="GO:0003713">
    <property type="term" value="F:transcription coactivator activity"/>
    <property type="evidence" value="ECO:0007669"/>
    <property type="project" value="EnsemblFungi"/>
</dbReference>
<dbReference type="GO" id="GO:0034605">
    <property type="term" value="P:cellular response to heat"/>
    <property type="evidence" value="ECO:0007669"/>
    <property type="project" value="EnsemblFungi"/>
</dbReference>
<dbReference type="GO" id="GO:0032968">
    <property type="term" value="P:positive regulation of transcription elongation by RNA polymerase II"/>
    <property type="evidence" value="ECO:0007669"/>
    <property type="project" value="EnsemblFungi"/>
</dbReference>
<dbReference type="GO" id="GO:0060261">
    <property type="term" value="P:positive regulation of transcription initiation by RNA polymerase II"/>
    <property type="evidence" value="ECO:0007669"/>
    <property type="project" value="EnsemblFungi"/>
</dbReference>
<dbReference type="GO" id="GO:0051123">
    <property type="term" value="P:RNA polymerase II preinitiation complex assembly"/>
    <property type="evidence" value="ECO:0007669"/>
    <property type="project" value="EnsemblFungi"/>
</dbReference>
<dbReference type="GO" id="GO:0006369">
    <property type="term" value="P:termination of RNA polymerase II transcription"/>
    <property type="evidence" value="ECO:0007669"/>
    <property type="project" value="EnsemblFungi"/>
</dbReference>
<dbReference type="GO" id="GO:0001113">
    <property type="term" value="P:transcription open complex formation at RNA polymerase II promoter"/>
    <property type="evidence" value="ECO:0007669"/>
    <property type="project" value="EnsemblFungi"/>
</dbReference>
<dbReference type="Gene3D" id="2.40.320.10">
    <property type="entry name" value="Hypothetical Protein Pfu-838710-001"/>
    <property type="match status" value="1"/>
</dbReference>
<dbReference type="InterPro" id="IPR019095">
    <property type="entry name" value="Mediator_Med18"/>
</dbReference>
<dbReference type="PANTHER" id="PTHR13321:SF2">
    <property type="entry name" value="MEDIATOR OF RNA POLYMERASE II TRANSCRIPTION SUBUNIT 18"/>
    <property type="match status" value="1"/>
</dbReference>
<dbReference type="PANTHER" id="PTHR13321">
    <property type="entry name" value="MEDIATOR OF RNA POLYMERASE II TRANSCRIPTION, SUBUNIT 18"/>
    <property type="match status" value="1"/>
</dbReference>
<dbReference type="Pfam" id="PF09637">
    <property type="entry name" value="Med18"/>
    <property type="match status" value="1"/>
</dbReference>
<reference key="1">
    <citation type="journal article" date="2004" name="Nature">
        <title>Genome evolution in yeasts.</title>
        <authorList>
            <person name="Dujon B."/>
            <person name="Sherman D."/>
            <person name="Fischer G."/>
            <person name="Durrens P."/>
            <person name="Casaregola S."/>
            <person name="Lafontaine I."/>
            <person name="de Montigny J."/>
            <person name="Marck C."/>
            <person name="Neuveglise C."/>
            <person name="Talla E."/>
            <person name="Goffard N."/>
            <person name="Frangeul L."/>
            <person name="Aigle M."/>
            <person name="Anthouard V."/>
            <person name="Babour A."/>
            <person name="Barbe V."/>
            <person name="Barnay S."/>
            <person name="Blanchin S."/>
            <person name="Beckerich J.-M."/>
            <person name="Beyne E."/>
            <person name="Bleykasten C."/>
            <person name="Boisrame A."/>
            <person name="Boyer J."/>
            <person name="Cattolico L."/>
            <person name="Confanioleri F."/>
            <person name="de Daruvar A."/>
            <person name="Despons L."/>
            <person name="Fabre E."/>
            <person name="Fairhead C."/>
            <person name="Ferry-Dumazet H."/>
            <person name="Groppi A."/>
            <person name="Hantraye F."/>
            <person name="Hennequin C."/>
            <person name="Jauniaux N."/>
            <person name="Joyet P."/>
            <person name="Kachouri R."/>
            <person name="Kerrest A."/>
            <person name="Koszul R."/>
            <person name="Lemaire M."/>
            <person name="Lesur I."/>
            <person name="Ma L."/>
            <person name="Muller H."/>
            <person name="Nicaud J.-M."/>
            <person name="Nikolski M."/>
            <person name="Oztas S."/>
            <person name="Ozier-Kalogeropoulos O."/>
            <person name="Pellenz S."/>
            <person name="Potier S."/>
            <person name="Richard G.-F."/>
            <person name="Straub M.-L."/>
            <person name="Suleau A."/>
            <person name="Swennen D."/>
            <person name="Tekaia F."/>
            <person name="Wesolowski-Louvel M."/>
            <person name="Westhof E."/>
            <person name="Wirth B."/>
            <person name="Zeniou-Meyer M."/>
            <person name="Zivanovic Y."/>
            <person name="Bolotin-Fukuhara M."/>
            <person name="Thierry A."/>
            <person name="Bouchier C."/>
            <person name="Caudron B."/>
            <person name="Scarpelli C."/>
            <person name="Gaillardin C."/>
            <person name="Weissenbach J."/>
            <person name="Wincker P."/>
            <person name="Souciet J.-L."/>
        </authorList>
    </citation>
    <scope>NUCLEOTIDE SEQUENCE [LARGE SCALE GENOMIC DNA]</scope>
    <source>
        <strain>ATCC 2001 / BCRC 20586 / JCM 3761 / NBRC 0622 / NRRL Y-65 / CBS 138</strain>
    </source>
</reference>
<evidence type="ECO:0000250" key="1"/>
<evidence type="ECO:0000305" key="2"/>
<accession>Q6FSU0</accession>
<sequence>MVQRLSLMATIADDDFPLFKTSINILTGSPAVVYANLMVVWKPNPNYEVDNLNSKNELVEPTRMTTATSIPLELILNDPVSKNNGVDSDEILNTMKEQEFPIKQEQLFDMINNPSNNTINWTLTTADIPAAGSNRKVSMQAIQEATIVHQAGNNPTLANVMAELGYSFDYMYVTVGVRFVHKRDVIIHCHKVWDIAEDNIIQVTKGGYVVHTFVTVNRATDIERLNLAEANLLSLQRDLSGYLDFKVPDRKSMDSRTNLTQKDITL</sequence>
<organism>
    <name type="scientific">Candida glabrata (strain ATCC 2001 / BCRC 20586 / JCM 3761 / NBRC 0622 / NRRL Y-65 / CBS 138)</name>
    <name type="common">Yeast</name>
    <name type="synonym">Nakaseomyces glabratus</name>
    <dbReference type="NCBI Taxonomy" id="284593"/>
    <lineage>
        <taxon>Eukaryota</taxon>
        <taxon>Fungi</taxon>
        <taxon>Dikarya</taxon>
        <taxon>Ascomycota</taxon>
        <taxon>Saccharomycotina</taxon>
        <taxon>Saccharomycetes</taxon>
        <taxon>Saccharomycetales</taxon>
        <taxon>Saccharomycetaceae</taxon>
        <taxon>Nakaseomyces</taxon>
    </lineage>
</organism>
<keyword id="KW-0010">Activator</keyword>
<keyword id="KW-0539">Nucleus</keyword>
<keyword id="KW-1185">Reference proteome</keyword>
<keyword id="KW-0804">Transcription</keyword>
<keyword id="KW-0805">Transcription regulation</keyword>